<comment type="function">
    <text evidence="1">Fluoride-specific ion channel. Important for reducing fluoride concentration in the cell, thus reducing its toxicity.</text>
</comment>
<comment type="catalytic activity">
    <reaction evidence="1">
        <text>fluoride(in) = fluoride(out)</text>
        <dbReference type="Rhea" id="RHEA:76159"/>
        <dbReference type="ChEBI" id="CHEBI:17051"/>
    </reaction>
    <physiologicalReaction direction="left-to-right" evidence="1">
        <dbReference type="Rhea" id="RHEA:76160"/>
    </physiologicalReaction>
</comment>
<comment type="activity regulation">
    <text evidence="1">Na(+) is not transported, but it plays an essential structural role and its presence is essential for fluoride channel function.</text>
</comment>
<comment type="subcellular location">
    <subcellularLocation>
        <location evidence="1">Cell membrane</location>
        <topology evidence="1">Multi-pass membrane protein</topology>
    </subcellularLocation>
</comment>
<comment type="similarity">
    <text evidence="1">Belongs to the fluoride channel Fluc/FEX (TC 1.A.43) family.</text>
</comment>
<evidence type="ECO:0000255" key="1">
    <source>
        <dbReference type="HAMAP-Rule" id="MF_00454"/>
    </source>
</evidence>
<sequence>MKIYSAVFIGGALGACLRYGLNLWIHTGQFPAATWLENAAGSLLLGILTGFFMIGAKRPLLSAFLGTGFCGGFTTMSTFSKETVMLLQGQPSLALLYVAASLISGIIFALIGVFVGRRIAGIQQRKGLQEK</sequence>
<feature type="chain" id="PRO_0000110057" description="Fluoride-specific ion channel FluC 2">
    <location>
        <begin position="1"/>
        <end position="131"/>
    </location>
</feature>
<feature type="transmembrane region" description="Helical" evidence="1">
    <location>
        <begin position="5"/>
        <end position="25"/>
    </location>
</feature>
<feature type="transmembrane region" description="Helical" evidence="1">
    <location>
        <begin position="35"/>
        <end position="55"/>
    </location>
</feature>
<feature type="transmembrane region" description="Helical" evidence="1">
    <location>
        <begin position="59"/>
        <end position="79"/>
    </location>
</feature>
<feature type="transmembrane region" description="Helical" evidence="1">
    <location>
        <begin position="95"/>
        <end position="115"/>
    </location>
</feature>
<feature type="binding site" evidence="1">
    <location>
        <position position="71"/>
    </location>
    <ligand>
        <name>Na(+)</name>
        <dbReference type="ChEBI" id="CHEBI:29101"/>
        <note>structural</note>
    </ligand>
</feature>
<feature type="binding site" evidence="1">
    <location>
        <position position="74"/>
    </location>
    <ligand>
        <name>Na(+)</name>
        <dbReference type="ChEBI" id="CHEBI:29101"/>
        <note>structural</note>
    </ligand>
</feature>
<keyword id="KW-1003">Cell membrane</keyword>
<keyword id="KW-0407">Ion channel</keyword>
<keyword id="KW-0406">Ion transport</keyword>
<keyword id="KW-0472">Membrane</keyword>
<keyword id="KW-0479">Metal-binding</keyword>
<keyword id="KW-1185">Reference proteome</keyword>
<keyword id="KW-0915">Sodium</keyword>
<keyword id="KW-0812">Transmembrane</keyword>
<keyword id="KW-1133">Transmembrane helix</keyword>
<keyword id="KW-0813">Transport</keyword>
<protein>
    <recommendedName>
        <fullName evidence="1">Fluoride-specific ion channel FluC 2</fullName>
    </recommendedName>
</protein>
<gene>
    <name evidence="1" type="primary">fluC2</name>
    <name evidence="1" type="synonym">crcB2</name>
    <name type="synonym">yhdV</name>
    <name type="ordered locus">BSU09610</name>
</gene>
<dbReference type="EMBL" id="Y14082">
    <property type="protein sequence ID" value="CAA74506.1"/>
    <property type="molecule type" value="Genomic_DNA"/>
</dbReference>
<dbReference type="EMBL" id="AL009126">
    <property type="protein sequence ID" value="CAB12800.1"/>
    <property type="molecule type" value="Genomic_DNA"/>
</dbReference>
<dbReference type="PIR" id="D69827">
    <property type="entry name" value="D69827"/>
</dbReference>
<dbReference type="RefSeq" id="WP_003245042.1">
    <property type="nucleotide sequence ID" value="NZ_OZ025638.1"/>
</dbReference>
<dbReference type="SMR" id="O07591"/>
<dbReference type="FunCoup" id="O07591">
    <property type="interactions" value="333"/>
</dbReference>
<dbReference type="STRING" id="224308.BSU09610"/>
<dbReference type="TCDB" id="1.A.43.1.2">
    <property type="family name" value="the camphor resistance or fluoride exporter (fluc) family"/>
</dbReference>
<dbReference type="PaxDb" id="224308-BSU09610"/>
<dbReference type="EnsemblBacteria" id="CAB12800">
    <property type="protein sequence ID" value="CAB12800"/>
    <property type="gene ID" value="BSU_09610"/>
</dbReference>
<dbReference type="GeneID" id="936272"/>
<dbReference type="KEGG" id="bsu:BSU09610"/>
<dbReference type="PATRIC" id="fig|224308.179.peg.1034"/>
<dbReference type="eggNOG" id="COG0239">
    <property type="taxonomic scope" value="Bacteria"/>
</dbReference>
<dbReference type="InParanoid" id="O07591"/>
<dbReference type="OrthoDB" id="9815830at2"/>
<dbReference type="PhylomeDB" id="O07591"/>
<dbReference type="BioCyc" id="BSUB:BSU09610-MONOMER"/>
<dbReference type="Proteomes" id="UP000001570">
    <property type="component" value="Chromosome"/>
</dbReference>
<dbReference type="GO" id="GO:0005886">
    <property type="term" value="C:plasma membrane"/>
    <property type="evidence" value="ECO:0000318"/>
    <property type="project" value="GO_Central"/>
</dbReference>
<dbReference type="GO" id="GO:0062054">
    <property type="term" value="F:fluoride channel activity"/>
    <property type="evidence" value="ECO:0007669"/>
    <property type="project" value="UniProtKB-UniRule"/>
</dbReference>
<dbReference type="GO" id="GO:1903425">
    <property type="term" value="F:fluoride transmembrane transporter activity"/>
    <property type="evidence" value="ECO:0000318"/>
    <property type="project" value="GO_Central"/>
</dbReference>
<dbReference type="GO" id="GO:0046872">
    <property type="term" value="F:metal ion binding"/>
    <property type="evidence" value="ECO:0007669"/>
    <property type="project" value="UniProtKB-KW"/>
</dbReference>
<dbReference type="GO" id="GO:0140114">
    <property type="term" value="P:cellular detoxification of fluoride"/>
    <property type="evidence" value="ECO:0007669"/>
    <property type="project" value="UniProtKB-UniRule"/>
</dbReference>
<dbReference type="GO" id="GO:1903424">
    <property type="term" value="P:fluoride transmembrane transport"/>
    <property type="evidence" value="ECO:0000318"/>
    <property type="project" value="GO_Central"/>
</dbReference>
<dbReference type="HAMAP" id="MF_00454">
    <property type="entry name" value="FluC"/>
    <property type="match status" value="1"/>
</dbReference>
<dbReference type="InterPro" id="IPR003691">
    <property type="entry name" value="FluC"/>
</dbReference>
<dbReference type="PANTHER" id="PTHR28259">
    <property type="entry name" value="FLUORIDE EXPORT PROTEIN 1-RELATED"/>
    <property type="match status" value="1"/>
</dbReference>
<dbReference type="PANTHER" id="PTHR28259:SF16">
    <property type="entry name" value="FLUORIDE-SPECIFIC ION CHANNEL FLUC 2"/>
    <property type="match status" value="1"/>
</dbReference>
<dbReference type="Pfam" id="PF02537">
    <property type="entry name" value="CRCB"/>
    <property type="match status" value="1"/>
</dbReference>
<organism>
    <name type="scientific">Bacillus subtilis (strain 168)</name>
    <dbReference type="NCBI Taxonomy" id="224308"/>
    <lineage>
        <taxon>Bacteria</taxon>
        <taxon>Bacillati</taxon>
        <taxon>Bacillota</taxon>
        <taxon>Bacilli</taxon>
        <taxon>Bacillales</taxon>
        <taxon>Bacillaceae</taxon>
        <taxon>Bacillus</taxon>
    </lineage>
</organism>
<accession>O07591</accession>
<name>FLUC2_BACSU</name>
<reference key="1">
    <citation type="journal article" date="1998" name="Microbiology">
        <title>The 172 kb prkA-addAB region from 83 degrees to 97 degrees of the Bacillus subtilis chromosome contains several dysfunctional genes, the glyB marker, many genes encoding transporter proteins, and the ubiquitous hit gene.</title>
        <authorList>
            <person name="Noback M.A."/>
            <person name="Holsappel S."/>
            <person name="Kiewiet R."/>
            <person name="Terpstra P."/>
            <person name="Wambutt R."/>
            <person name="Wedler H."/>
            <person name="Venema G."/>
            <person name="Bron S."/>
        </authorList>
    </citation>
    <scope>NUCLEOTIDE SEQUENCE [GENOMIC DNA]</scope>
    <source>
        <strain>168</strain>
    </source>
</reference>
<reference key="2">
    <citation type="journal article" date="1997" name="Nature">
        <title>The complete genome sequence of the Gram-positive bacterium Bacillus subtilis.</title>
        <authorList>
            <person name="Kunst F."/>
            <person name="Ogasawara N."/>
            <person name="Moszer I."/>
            <person name="Albertini A.M."/>
            <person name="Alloni G."/>
            <person name="Azevedo V."/>
            <person name="Bertero M.G."/>
            <person name="Bessieres P."/>
            <person name="Bolotin A."/>
            <person name="Borchert S."/>
            <person name="Borriss R."/>
            <person name="Boursier L."/>
            <person name="Brans A."/>
            <person name="Braun M."/>
            <person name="Brignell S.C."/>
            <person name="Bron S."/>
            <person name="Brouillet S."/>
            <person name="Bruschi C.V."/>
            <person name="Caldwell B."/>
            <person name="Capuano V."/>
            <person name="Carter N.M."/>
            <person name="Choi S.-K."/>
            <person name="Codani J.-J."/>
            <person name="Connerton I.F."/>
            <person name="Cummings N.J."/>
            <person name="Daniel R.A."/>
            <person name="Denizot F."/>
            <person name="Devine K.M."/>
            <person name="Duesterhoeft A."/>
            <person name="Ehrlich S.D."/>
            <person name="Emmerson P.T."/>
            <person name="Entian K.-D."/>
            <person name="Errington J."/>
            <person name="Fabret C."/>
            <person name="Ferrari E."/>
            <person name="Foulger D."/>
            <person name="Fritz C."/>
            <person name="Fujita M."/>
            <person name="Fujita Y."/>
            <person name="Fuma S."/>
            <person name="Galizzi A."/>
            <person name="Galleron N."/>
            <person name="Ghim S.-Y."/>
            <person name="Glaser P."/>
            <person name="Goffeau A."/>
            <person name="Golightly E.J."/>
            <person name="Grandi G."/>
            <person name="Guiseppi G."/>
            <person name="Guy B.J."/>
            <person name="Haga K."/>
            <person name="Haiech J."/>
            <person name="Harwood C.R."/>
            <person name="Henaut A."/>
            <person name="Hilbert H."/>
            <person name="Holsappel S."/>
            <person name="Hosono S."/>
            <person name="Hullo M.-F."/>
            <person name="Itaya M."/>
            <person name="Jones L.-M."/>
            <person name="Joris B."/>
            <person name="Karamata D."/>
            <person name="Kasahara Y."/>
            <person name="Klaerr-Blanchard M."/>
            <person name="Klein C."/>
            <person name="Kobayashi Y."/>
            <person name="Koetter P."/>
            <person name="Koningstein G."/>
            <person name="Krogh S."/>
            <person name="Kumano M."/>
            <person name="Kurita K."/>
            <person name="Lapidus A."/>
            <person name="Lardinois S."/>
            <person name="Lauber J."/>
            <person name="Lazarevic V."/>
            <person name="Lee S.-M."/>
            <person name="Levine A."/>
            <person name="Liu H."/>
            <person name="Masuda S."/>
            <person name="Mauel C."/>
            <person name="Medigue C."/>
            <person name="Medina N."/>
            <person name="Mellado R.P."/>
            <person name="Mizuno M."/>
            <person name="Moestl D."/>
            <person name="Nakai S."/>
            <person name="Noback M."/>
            <person name="Noone D."/>
            <person name="O'Reilly M."/>
            <person name="Ogawa K."/>
            <person name="Ogiwara A."/>
            <person name="Oudega B."/>
            <person name="Park S.-H."/>
            <person name="Parro V."/>
            <person name="Pohl T.M."/>
            <person name="Portetelle D."/>
            <person name="Porwollik S."/>
            <person name="Prescott A.M."/>
            <person name="Presecan E."/>
            <person name="Pujic P."/>
            <person name="Purnelle B."/>
            <person name="Rapoport G."/>
            <person name="Rey M."/>
            <person name="Reynolds S."/>
            <person name="Rieger M."/>
            <person name="Rivolta C."/>
            <person name="Rocha E."/>
            <person name="Roche B."/>
            <person name="Rose M."/>
            <person name="Sadaie Y."/>
            <person name="Sato T."/>
            <person name="Scanlan E."/>
            <person name="Schleich S."/>
            <person name="Schroeter R."/>
            <person name="Scoffone F."/>
            <person name="Sekiguchi J."/>
            <person name="Sekowska A."/>
            <person name="Seror S.J."/>
            <person name="Serror P."/>
            <person name="Shin B.-S."/>
            <person name="Soldo B."/>
            <person name="Sorokin A."/>
            <person name="Tacconi E."/>
            <person name="Takagi T."/>
            <person name="Takahashi H."/>
            <person name="Takemaru K."/>
            <person name="Takeuchi M."/>
            <person name="Tamakoshi A."/>
            <person name="Tanaka T."/>
            <person name="Terpstra P."/>
            <person name="Tognoni A."/>
            <person name="Tosato V."/>
            <person name="Uchiyama S."/>
            <person name="Vandenbol M."/>
            <person name="Vannier F."/>
            <person name="Vassarotti A."/>
            <person name="Viari A."/>
            <person name="Wambutt R."/>
            <person name="Wedler E."/>
            <person name="Wedler H."/>
            <person name="Weitzenegger T."/>
            <person name="Winters P."/>
            <person name="Wipat A."/>
            <person name="Yamamoto H."/>
            <person name="Yamane K."/>
            <person name="Yasumoto K."/>
            <person name="Yata K."/>
            <person name="Yoshida K."/>
            <person name="Yoshikawa H.-F."/>
            <person name="Zumstein E."/>
            <person name="Yoshikawa H."/>
            <person name="Danchin A."/>
        </authorList>
    </citation>
    <scope>NUCLEOTIDE SEQUENCE [LARGE SCALE GENOMIC DNA]</scope>
    <source>
        <strain>168</strain>
    </source>
</reference>
<proteinExistence type="inferred from homology"/>